<sequence>MSTFAEAPAGDLARGEKIFKTKCAQCHVAEKGGGHKQGPNLGGLFGRVSGTAAGFAYSKANKEAAVTWGESTLYEYLLNPKKYMPGNKMVFAGLKKPEERADLIAYLKQATA</sequence>
<feature type="initiator methionine" description="Removed" evidence="1">
    <location>
        <position position="1"/>
    </location>
</feature>
<feature type="chain" id="PRO_0000108291" description="Cytochrome c">
    <location>
        <begin position="2"/>
        <end position="112"/>
    </location>
</feature>
<feature type="binding site" description="covalent">
    <location>
        <position position="23"/>
    </location>
    <ligand>
        <name>heme c</name>
        <dbReference type="ChEBI" id="CHEBI:61717"/>
    </ligand>
</feature>
<feature type="binding site" description="covalent">
    <location>
        <position position="26"/>
    </location>
    <ligand>
        <name>heme c</name>
        <dbReference type="ChEBI" id="CHEBI:61717"/>
    </ligand>
</feature>
<feature type="binding site" description="axial binding residue">
    <location>
        <position position="27"/>
    </location>
    <ligand>
        <name>heme c</name>
        <dbReference type="ChEBI" id="CHEBI:61717"/>
    </ligand>
    <ligandPart>
        <name>Fe</name>
        <dbReference type="ChEBI" id="CHEBI:18248"/>
    </ligandPart>
</feature>
<feature type="binding site" description="axial binding residue">
    <location>
        <position position="89"/>
    </location>
    <ligand>
        <name>heme c</name>
        <dbReference type="ChEBI" id="CHEBI:61717"/>
    </ligand>
    <ligandPart>
        <name>Fe</name>
        <dbReference type="ChEBI" id="CHEBI:18248"/>
    </ligandPart>
</feature>
<name>CYC_CHLRE</name>
<keyword id="KW-0249">Electron transport</keyword>
<keyword id="KW-0349">Heme</keyword>
<keyword id="KW-0408">Iron</keyword>
<keyword id="KW-0479">Metal-binding</keyword>
<keyword id="KW-0496">Mitochondrion</keyword>
<keyword id="KW-0679">Respiratory chain</keyword>
<keyword id="KW-0813">Transport</keyword>
<gene>
    <name type="primary">CYC1</name>
</gene>
<proteinExistence type="inferred from homology"/>
<comment type="function">
    <text>Electron carrier protein. The oxidized form of the cytochrome c heme group can accept an electron from the heme group of the cytochrome c1 subunit of cytochrome reductase. Cytochrome c then transfers this electron to the cytochrome oxidase complex, the final protein carrier in the mitochondrial electron-transport chain.</text>
</comment>
<comment type="subcellular location">
    <subcellularLocation>
        <location>Mitochondrion intermembrane space</location>
    </subcellularLocation>
    <text>Loosely associated with the inner membrane.</text>
</comment>
<comment type="PTM">
    <text>Binds 1 heme c group covalently per subunit.</text>
</comment>
<comment type="similarity">
    <text evidence="2">Belongs to the cytochrome c family.</text>
</comment>
<comment type="online information" name="Protein Spotlight">
    <link uri="https://www.proteinspotlight.org/back_issues/076"/>
    <text>Life shuttle - Issue 76 of November 2006</text>
</comment>
<reference key="1">
    <citation type="journal article" date="1988" name="J. Mol. Evol.">
        <title>cDNA and deduced amino acid sequences of cytochrome c from Chlamydomonas reinhardtii: unexpected functional and phylogenetic implications.</title>
        <authorList>
            <person name="Amati B.B."/>
            <person name="Goldschmidt-Clermont M."/>
            <person name="Wallace C.J.A."/>
            <person name="Rochaix J.-D."/>
        </authorList>
    </citation>
    <scope>NUCLEOTIDE SEQUENCE [MRNA]</scope>
    <source>
        <strain>137c / CC-125</strain>
        <strain>cw15</strain>
    </source>
</reference>
<reference key="2">
    <citation type="journal article" date="2000" name="Plant Cell Physiol.">
        <title>The cytochrome c gene from the green alga Chlamydomonas reinhardtii. Structure and expression in wild-type cells and in obligate photoautotrophic (dk) mutants.</title>
        <authorList>
            <person name="Felitti S.A."/>
            <person name="Chan R.L."/>
            <person name="Sierra M.G."/>
            <person name="Gonzalez D.H."/>
        </authorList>
    </citation>
    <scope>NUCLEOTIDE SEQUENCE [GENOMIC DNA]</scope>
    <source>
        <strain>137c / CC-125</strain>
    </source>
</reference>
<protein>
    <recommendedName>
        <fullName>Cytochrome c</fullName>
    </recommendedName>
</protein>
<evidence type="ECO:0000250" key="1"/>
<evidence type="ECO:0000305" key="2"/>
<dbReference type="EMBL" id="M35173">
    <property type="protein sequence ID" value="AAA33084.1"/>
    <property type="molecule type" value="mRNA"/>
</dbReference>
<dbReference type="EMBL" id="Z99829">
    <property type="protein sequence ID" value="CAB16954.1"/>
    <property type="molecule type" value="Genomic_DNA"/>
</dbReference>
<dbReference type="PIR" id="S29514">
    <property type="entry name" value="S29514"/>
</dbReference>
<dbReference type="RefSeq" id="XP_001696912.1">
    <property type="nucleotide sequence ID" value="XM_001696860.1"/>
</dbReference>
<dbReference type="SMR" id="P15451"/>
<dbReference type="PaxDb" id="3055-EDP00604"/>
<dbReference type="ProMEX" id="P15451"/>
<dbReference type="EnsemblPlants" id="PNW75327">
    <property type="protein sequence ID" value="PNW75327"/>
    <property type="gene ID" value="CHLRE_12g522600v5"/>
</dbReference>
<dbReference type="Gramene" id="PNW75327">
    <property type="protein sequence ID" value="PNW75327"/>
    <property type="gene ID" value="CHLRE_12g522600v5"/>
</dbReference>
<dbReference type="KEGG" id="cre:CHLRE_12g522600v5"/>
<dbReference type="eggNOG" id="KOG3453">
    <property type="taxonomic scope" value="Eukaryota"/>
</dbReference>
<dbReference type="HOGENOM" id="CLU_060944_3_0_1"/>
<dbReference type="OMA" id="KMRHVGI"/>
<dbReference type="OrthoDB" id="449280at2759"/>
<dbReference type="GO" id="GO:0005758">
    <property type="term" value="C:mitochondrial intermembrane space"/>
    <property type="evidence" value="ECO:0007669"/>
    <property type="project" value="UniProtKB-SubCell"/>
</dbReference>
<dbReference type="GO" id="GO:0009055">
    <property type="term" value="F:electron transfer activity"/>
    <property type="evidence" value="ECO:0007669"/>
    <property type="project" value="InterPro"/>
</dbReference>
<dbReference type="GO" id="GO:0020037">
    <property type="term" value="F:heme binding"/>
    <property type="evidence" value="ECO:0007669"/>
    <property type="project" value="InterPro"/>
</dbReference>
<dbReference type="GO" id="GO:0046872">
    <property type="term" value="F:metal ion binding"/>
    <property type="evidence" value="ECO:0007669"/>
    <property type="project" value="UniProtKB-KW"/>
</dbReference>
<dbReference type="FunFam" id="1.10.760.10:FF:000001">
    <property type="entry name" value="Cytochrome c iso-1"/>
    <property type="match status" value="1"/>
</dbReference>
<dbReference type="Gene3D" id="1.10.760.10">
    <property type="entry name" value="Cytochrome c-like domain"/>
    <property type="match status" value="1"/>
</dbReference>
<dbReference type="InterPro" id="IPR009056">
    <property type="entry name" value="Cyt_c-like_dom"/>
</dbReference>
<dbReference type="InterPro" id="IPR036909">
    <property type="entry name" value="Cyt_c-like_dom_sf"/>
</dbReference>
<dbReference type="InterPro" id="IPR002327">
    <property type="entry name" value="Cyt_c_1A/1B"/>
</dbReference>
<dbReference type="PANTHER" id="PTHR11961">
    <property type="entry name" value="CYTOCHROME C"/>
    <property type="match status" value="1"/>
</dbReference>
<dbReference type="Pfam" id="PF00034">
    <property type="entry name" value="Cytochrom_C"/>
    <property type="match status" value="1"/>
</dbReference>
<dbReference type="PRINTS" id="PR00604">
    <property type="entry name" value="CYTCHRMECIAB"/>
</dbReference>
<dbReference type="SUPFAM" id="SSF46626">
    <property type="entry name" value="Cytochrome c"/>
    <property type="match status" value="1"/>
</dbReference>
<dbReference type="PROSITE" id="PS51007">
    <property type="entry name" value="CYTC"/>
    <property type="match status" value="1"/>
</dbReference>
<organism>
    <name type="scientific">Chlamydomonas reinhardtii</name>
    <name type="common">Chlamydomonas smithii</name>
    <dbReference type="NCBI Taxonomy" id="3055"/>
    <lineage>
        <taxon>Eukaryota</taxon>
        <taxon>Viridiplantae</taxon>
        <taxon>Chlorophyta</taxon>
        <taxon>core chlorophytes</taxon>
        <taxon>Chlorophyceae</taxon>
        <taxon>CS clade</taxon>
        <taxon>Chlamydomonadales</taxon>
        <taxon>Chlamydomonadaceae</taxon>
        <taxon>Chlamydomonas</taxon>
    </lineage>
</organism>
<accession>P15451</accession>